<keyword id="KW-0012">Acyltransferase</keyword>
<keyword id="KW-0997">Cell inner membrane</keyword>
<keyword id="KW-1003">Cell membrane</keyword>
<keyword id="KW-0472">Membrane</keyword>
<keyword id="KW-0808">Transferase</keyword>
<keyword id="KW-0812">Transmembrane</keyword>
<keyword id="KW-1133">Transmembrane helix</keyword>
<comment type="function">
    <text evidence="1">Catalyzes the phospholipid dependent N-acylation of the N-terminal cysteine of apolipoprotein, the last step in lipoprotein maturation.</text>
</comment>
<comment type="catalytic activity">
    <reaction evidence="1">
        <text>N-terminal S-1,2-diacyl-sn-glyceryl-L-cysteinyl-[lipoprotein] + a glycerophospholipid = N-acyl-S-1,2-diacyl-sn-glyceryl-L-cysteinyl-[lipoprotein] + a 2-acyl-sn-glycero-3-phospholipid + H(+)</text>
        <dbReference type="Rhea" id="RHEA:48228"/>
        <dbReference type="Rhea" id="RHEA-COMP:14681"/>
        <dbReference type="Rhea" id="RHEA-COMP:14684"/>
        <dbReference type="ChEBI" id="CHEBI:15378"/>
        <dbReference type="ChEBI" id="CHEBI:136912"/>
        <dbReference type="ChEBI" id="CHEBI:140656"/>
        <dbReference type="ChEBI" id="CHEBI:140657"/>
        <dbReference type="ChEBI" id="CHEBI:140660"/>
        <dbReference type="EC" id="2.3.1.269"/>
    </reaction>
</comment>
<comment type="pathway">
    <text evidence="1">Protein modification; lipoprotein biosynthesis (N-acyl transfer).</text>
</comment>
<comment type="subcellular location">
    <subcellularLocation>
        <location evidence="1">Cell inner membrane</location>
        <topology evidence="1">Multi-pass membrane protein</topology>
    </subcellularLocation>
</comment>
<comment type="similarity">
    <text evidence="1">Belongs to the CN hydrolase family. Apolipoprotein N-acyltransferase subfamily.</text>
</comment>
<protein>
    <recommendedName>
        <fullName evidence="1">Apolipoprotein N-acyltransferase</fullName>
        <shortName evidence="1">ALP N-acyltransferase</shortName>
        <ecNumber evidence="1">2.3.1.269</ecNumber>
    </recommendedName>
</protein>
<organism>
    <name type="scientific">Brucella melitensis biotype 1 (strain ATCC 23456 / CCUG 17765 / NCTC 10094 / 16M)</name>
    <dbReference type="NCBI Taxonomy" id="224914"/>
    <lineage>
        <taxon>Bacteria</taxon>
        <taxon>Pseudomonadati</taxon>
        <taxon>Pseudomonadota</taxon>
        <taxon>Alphaproteobacteria</taxon>
        <taxon>Hyphomicrobiales</taxon>
        <taxon>Brucellaceae</taxon>
        <taxon>Brucella/Ochrobactrum group</taxon>
        <taxon>Brucella</taxon>
    </lineage>
</organism>
<dbReference type="EC" id="2.3.1.269" evidence="1"/>
<dbReference type="EMBL" id="AE008917">
    <property type="protein sequence ID" value="AAL53153.1"/>
    <property type="molecule type" value="Genomic_DNA"/>
</dbReference>
<dbReference type="PIR" id="AF3498">
    <property type="entry name" value="AF3498"/>
</dbReference>
<dbReference type="RefSeq" id="WP_011005451.1">
    <property type="nucleotide sequence ID" value="NC_003317.1"/>
</dbReference>
<dbReference type="SMR" id="Q8YEA6"/>
<dbReference type="GeneID" id="29594857"/>
<dbReference type="KEGG" id="bme:BMEI1972"/>
<dbReference type="eggNOG" id="COG0815">
    <property type="taxonomic scope" value="Bacteria"/>
</dbReference>
<dbReference type="PhylomeDB" id="Q8YEA6"/>
<dbReference type="UniPathway" id="UPA00666"/>
<dbReference type="Proteomes" id="UP000000419">
    <property type="component" value="Chromosome I"/>
</dbReference>
<dbReference type="GO" id="GO:0005886">
    <property type="term" value="C:plasma membrane"/>
    <property type="evidence" value="ECO:0007669"/>
    <property type="project" value="UniProtKB-SubCell"/>
</dbReference>
<dbReference type="GO" id="GO:0016410">
    <property type="term" value="F:N-acyltransferase activity"/>
    <property type="evidence" value="ECO:0007669"/>
    <property type="project" value="UniProtKB-UniRule"/>
</dbReference>
<dbReference type="GO" id="GO:0042158">
    <property type="term" value="P:lipoprotein biosynthetic process"/>
    <property type="evidence" value="ECO:0007669"/>
    <property type="project" value="UniProtKB-UniRule"/>
</dbReference>
<dbReference type="CDD" id="cd07571">
    <property type="entry name" value="ALP_N-acyl_transferase"/>
    <property type="match status" value="1"/>
</dbReference>
<dbReference type="Gene3D" id="3.60.110.10">
    <property type="entry name" value="Carbon-nitrogen hydrolase"/>
    <property type="match status" value="1"/>
</dbReference>
<dbReference type="HAMAP" id="MF_01148">
    <property type="entry name" value="Lnt"/>
    <property type="match status" value="1"/>
</dbReference>
<dbReference type="InterPro" id="IPR004563">
    <property type="entry name" value="Apolipo_AcylTrfase"/>
</dbReference>
<dbReference type="InterPro" id="IPR003010">
    <property type="entry name" value="C-N_Hydrolase"/>
</dbReference>
<dbReference type="InterPro" id="IPR036526">
    <property type="entry name" value="C-N_Hydrolase_sf"/>
</dbReference>
<dbReference type="InterPro" id="IPR045378">
    <property type="entry name" value="LNT_N"/>
</dbReference>
<dbReference type="NCBIfam" id="TIGR00546">
    <property type="entry name" value="lnt"/>
    <property type="match status" value="1"/>
</dbReference>
<dbReference type="PANTHER" id="PTHR38686">
    <property type="entry name" value="APOLIPOPROTEIN N-ACYLTRANSFERASE"/>
    <property type="match status" value="1"/>
</dbReference>
<dbReference type="PANTHER" id="PTHR38686:SF1">
    <property type="entry name" value="APOLIPOPROTEIN N-ACYLTRANSFERASE"/>
    <property type="match status" value="1"/>
</dbReference>
<dbReference type="Pfam" id="PF00795">
    <property type="entry name" value="CN_hydrolase"/>
    <property type="match status" value="1"/>
</dbReference>
<dbReference type="Pfam" id="PF20154">
    <property type="entry name" value="LNT_N"/>
    <property type="match status" value="1"/>
</dbReference>
<dbReference type="SUPFAM" id="SSF56317">
    <property type="entry name" value="Carbon-nitrogen hydrolase"/>
    <property type="match status" value="1"/>
</dbReference>
<dbReference type="PROSITE" id="PS50263">
    <property type="entry name" value="CN_HYDROLASE"/>
    <property type="match status" value="1"/>
</dbReference>
<name>LNT_BRUME</name>
<sequence length="532" mass="57539">MIARLAGRIILLNGWRRALAAFLSGAFATLTQPPFDIFVAGFVSFPVLVWLIDGAIARTDAGPLRRLLLAAKVGWWFGFGYFVSGLWWIGTALLVDADQFAWALPLAVLGLPAFLALFYAFAAMIARLLWSDGLGRILAFAFGFALAEWLRTFIFTGFPWNLIGYAAMPVPLLMQSVAVIGLVGMSALAVFVFAAPALLTGGHFARTGIGLAIFLALAHVGFGAWTLSRAPAIVDENGPLAVRIVQPSIAQAMKWDNAERRAIFDKLVGLTEEAPAEGKPRPDVIVWPETAIPYILESTPQALAHIGDALQEGQVLLAGAVREEKGADGGEPRYYNSIYTIDDRGRIVSTADKVHLVPFGEYLPFESFLRGLGLQEVVEMPGGFTAGTTRHALAVKDGRSFLPLICYEAIFPDELGYEGAGASAIINVTNDAWYGDTPGPYQHFRQAQVRAVEQGLPLIRAANNGLSAIVDTYGRITGSLALDAVGVVDSYLPSPRDPFWGRPPGWIQTVLILLTLLAASVGLILYSRRRFH</sequence>
<accession>Q8YEA6</accession>
<reference key="1">
    <citation type="journal article" date="2002" name="Proc. Natl. Acad. Sci. U.S.A.">
        <title>The genome sequence of the facultative intracellular pathogen Brucella melitensis.</title>
        <authorList>
            <person name="DelVecchio V.G."/>
            <person name="Kapatral V."/>
            <person name="Redkar R.J."/>
            <person name="Patra G."/>
            <person name="Mujer C."/>
            <person name="Los T."/>
            <person name="Ivanova N."/>
            <person name="Anderson I."/>
            <person name="Bhattacharyya A."/>
            <person name="Lykidis A."/>
            <person name="Reznik G."/>
            <person name="Jablonski L."/>
            <person name="Larsen N."/>
            <person name="D'Souza M."/>
            <person name="Bernal A."/>
            <person name="Mazur M."/>
            <person name="Goltsman E."/>
            <person name="Selkov E."/>
            <person name="Elzer P.H."/>
            <person name="Hagius S."/>
            <person name="O'Callaghan D."/>
            <person name="Letesson J.-J."/>
            <person name="Haselkorn R."/>
            <person name="Kyrpides N.C."/>
            <person name="Overbeek R."/>
        </authorList>
    </citation>
    <scope>NUCLEOTIDE SEQUENCE [LARGE SCALE GENOMIC DNA]</scope>
    <source>
        <strain>ATCC 23456 / CCUG 17765 / NCTC 10094 / 16M</strain>
    </source>
</reference>
<proteinExistence type="inferred from homology"/>
<gene>
    <name evidence="1" type="primary">lnt</name>
    <name type="ordered locus">BMEI1972</name>
</gene>
<evidence type="ECO:0000255" key="1">
    <source>
        <dbReference type="HAMAP-Rule" id="MF_01148"/>
    </source>
</evidence>
<feature type="chain" id="PRO_0000178050" description="Apolipoprotein N-acyltransferase">
    <location>
        <begin position="1"/>
        <end position="532"/>
    </location>
</feature>
<feature type="transmembrane region" description="Helical" evidence="1">
    <location>
        <begin position="37"/>
        <end position="57"/>
    </location>
</feature>
<feature type="transmembrane region" description="Helical" evidence="1">
    <location>
        <begin position="75"/>
        <end position="95"/>
    </location>
</feature>
<feature type="transmembrane region" description="Helical" evidence="1">
    <location>
        <begin position="106"/>
        <end position="126"/>
    </location>
</feature>
<feature type="transmembrane region" description="Helical" evidence="1">
    <location>
        <begin position="128"/>
        <end position="148"/>
    </location>
</feature>
<feature type="transmembrane region" description="Helical" evidence="1">
    <location>
        <begin position="179"/>
        <end position="199"/>
    </location>
</feature>
<feature type="transmembrane region" description="Helical" evidence="1">
    <location>
        <begin position="207"/>
        <end position="227"/>
    </location>
</feature>
<feature type="transmembrane region" description="Helical" evidence="1">
    <location>
        <begin position="505"/>
        <end position="525"/>
    </location>
</feature>
<feature type="domain" description="CN hydrolase" evidence="1">
    <location>
        <begin position="245"/>
        <end position="494"/>
    </location>
</feature>
<feature type="active site" description="Proton acceptor" evidence="1">
    <location>
        <position position="289"/>
    </location>
</feature>
<feature type="active site" evidence="1">
    <location>
        <position position="353"/>
    </location>
</feature>
<feature type="active site" description="Nucleophile" evidence="1">
    <location>
        <position position="406"/>
    </location>
</feature>